<keyword id="KW-1003">Cell membrane</keyword>
<keyword id="KW-0472">Membrane</keyword>
<keyword id="KW-0812">Transmembrane</keyword>
<keyword id="KW-1133">Transmembrane helix</keyword>
<comment type="subcellular location">
    <subcellularLocation>
        <location evidence="1">Cell membrane</location>
        <topology evidence="1">Multi-pass membrane protein</topology>
    </subcellularLocation>
</comment>
<comment type="similarity">
    <text evidence="1">Belongs to the UPF0756 family.</text>
</comment>
<organism>
    <name type="scientific">Escherichia coli O7:K1 (strain IAI39 / ExPEC)</name>
    <dbReference type="NCBI Taxonomy" id="585057"/>
    <lineage>
        <taxon>Bacteria</taxon>
        <taxon>Pseudomonadati</taxon>
        <taxon>Pseudomonadota</taxon>
        <taxon>Gammaproteobacteria</taxon>
        <taxon>Enterobacterales</taxon>
        <taxon>Enterobacteriaceae</taxon>
        <taxon>Escherichia</taxon>
    </lineage>
</organism>
<dbReference type="EMBL" id="CU928164">
    <property type="protein sequence ID" value="CAR17398.1"/>
    <property type="molecule type" value="Genomic_DNA"/>
</dbReference>
<dbReference type="RefSeq" id="WP_000460707.1">
    <property type="nucleotide sequence ID" value="NC_011750.1"/>
</dbReference>
<dbReference type="RefSeq" id="YP_002407272.1">
    <property type="nucleotide sequence ID" value="NC_011750.1"/>
</dbReference>
<dbReference type="STRING" id="585057.ECIAI39_1264"/>
<dbReference type="KEGG" id="ect:ECIAI39_1264"/>
<dbReference type="PATRIC" id="fig|585057.6.peg.1323"/>
<dbReference type="HOGENOM" id="CLU_125889_0_0_6"/>
<dbReference type="Proteomes" id="UP000000749">
    <property type="component" value="Chromosome"/>
</dbReference>
<dbReference type="GO" id="GO:0005886">
    <property type="term" value="C:plasma membrane"/>
    <property type="evidence" value="ECO:0007669"/>
    <property type="project" value="UniProtKB-SubCell"/>
</dbReference>
<dbReference type="HAMAP" id="MF_01874">
    <property type="entry name" value="UPF0756"/>
    <property type="match status" value="1"/>
</dbReference>
<dbReference type="InterPro" id="IPR007382">
    <property type="entry name" value="UPF0756_TM"/>
</dbReference>
<dbReference type="PANTHER" id="PTHR38452">
    <property type="entry name" value="UPF0756 MEMBRANE PROTEIN YEAL"/>
    <property type="match status" value="1"/>
</dbReference>
<dbReference type="PANTHER" id="PTHR38452:SF1">
    <property type="entry name" value="UPF0756 MEMBRANE PROTEIN YEAL"/>
    <property type="match status" value="1"/>
</dbReference>
<dbReference type="Pfam" id="PF04284">
    <property type="entry name" value="DUF441"/>
    <property type="match status" value="1"/>
</dbReference>
<reference key="1">
    <citation type="journal article" date="2009" name="PLoS Genet.">
        <title>Organised genome dynamics in the Escherichia coli species results in highly diverse adaptive paths.</title>
        <authorList>
            <person name="Touchon M."/>
            <person name="Hoede C."/>
            <person name="Tenaillon O."/>
            <person name="Barbe V."/>
            <person name="Baeriswyl S."/>
            <person name="Bidet P."/>
            <person name="Bingen E."/>
            <person name="Bonacorsi S."/>
            <person name="Bouchier C."/>
            <person name="Bouvet O."/>
            <person name="Calteau A."/>
            <person name="Chiapello H."/>
            <person name="Clermont O."/>
            <person name="Cruveiller S."/>
            <person name="Danchin A."/>
            <person name="Diard M."/>
            <person name="Dossat C."/>
            <person name="Karoui M.E."/>
            <person name="Frapy E."/>
            <person name="Garry L."/>
            <person name="Ghigo J.M."/>
            <person name="Gilles A.M."/>
            <person name="Johnson J."/>
            <person name="Le Bouguenec C."/>
            <person name="Lescat M."/>
            <person name="Mangenot S."/>
            <person name="Martinez-Jehanne V."/>
            <person name="Matic I."/>
            <person name="Nassif X."/>
            <person name="Oztas S."/>
            <person name="Petit M.A."/>
            <person name="Pichon C."/>
            <person name="Rouy Z."/>
            <person name="Ruf C.S."/>
            <person name="Schneider D."/>
            <person name="Tourret J."/>
            <person name="Vacherie B."/>
            <person name="Vallenet D."/>
            <person name="Medigue C."/>
            <person name="Rocha E.P.C."/>
            <person name="Denamur E."/>
        </authorList>
    </citation>
    <scope>NUCLEOTIDE SEQUENCE [LARGE SCALE GENOMIC DNA]</scope>
    <source>
        <strain>IAI39 / ExPEC</strain>
    </source>
</reference>
<evidence type="ECO:0000255" key="1">
    <source>
        <dbReference type="HAMAP-Rule" id="MF_01874"/>
    </source>
</evidence>
<gene>
    <name evidence="1" type="primary">yeaL</name>
    <name type="ordered locus">ECIAI39_1264</name>
</gene>
<protein>
    <recommendedName>
        <fullName evidence="1">UPF0756 membrane protein YeaL</fullName>
    </recommendedName>
</protein>
<name>YEAL_ECO7I</name>
<sequence length="148" mass="15256">MFDVTLLILLGLAALGFISHNTTVAVSILVLIIVRVTPLSTFFPWIEKQGLSIGIIILTIGVMAPIASGTLPPSTLIHSFLNWKSLVAIAVGVIVSWLGGRGVTLMGSQPQLVAGLLVGTVLGVALFRGVPVGPLIAAGLVSLIVGKQ</sequence>
<accession>B7NSY7</accession>
<proteinExistence type="inferred from homology"/>
<feature type="chain" id="PRO_0000388870" description="UPF0756 membrane protein YeaL">
    <location>
        <begin position="1"/>
        <end position="148"/>
    </location>
</feature>
<feature type="transmembrane region" description="Helical" evidence="1">
    <location>
        <begin position="14"/>
        <end position="34"/>
    </location>
</feature>
<feature type="transmembrane region" description="Helical" evidence="1">
    <location>
        <begin position="51"/>
        <end position="71"/>
    </location>
</feature>
<feature type="transmembrane region" description="Helical" evidence="1">
    <location>
        <begin position="86"/>
        <end position="106"/>
    </location>
</feature>
<feature type="transmembrane region" description="Helical" evidence="1">
    <location>
        <begin position="121"/>
        <end position="141"/>
    </location>
</feature>